<comment type="function">
    <text evidence="2 3 4">May regulate secretion and presynaptic differentiation through inhibition of the activity of N-type voltage-gated calcium channel. May activate the MAP kinase JNK (By similarity). Plays a role in neurite outgrowth (By similarity). During dendritic spine formation can bidirectionally induce pre- and post-synaptic differentiation of neurons by trans-synaptically binding to PTPRD (By similarity).</text>
</comment>
<comment type="catalytic activity">
    <reaction evidence="7">
        <text>NAD(+) + H2O = ADP-D-ribose + nicotinamide + H(+)</text>
        <dbReference type="Rhea" id="RHEA:16301"/>
        <dbReference type="ChEBI" id="CHEBI:15377"/>
        <dbReference type="ChEBI" id="CHEBI:15378"/>
        <dbReference type="ChEBI" id="CHEBI:17154"/>
        <dbReference type="ChEBI" id="CHEBI:57540"/>
        <dbReference type="ChEBI" id="CHEBI:57967"/>
        <dbReference type="EC" id="3.2.2.6"/>
    </reaction>
    <physiologicalReaction direction="left-to-right" evidence="7">
        <dbReference type="Rhea" id="RHEA:16302"/>
    </physiologicalReaction>
</comment>
<comment type="subunit">
    <text evidence="2 4">Homodimer (By similarity). Interacts (calcium-independent) with NCS1/FREQ (By similarity). Interacts (via the first immunoglobilin domain) with PTPRD (via the second immunoglobilin domain); this interaction is PTPRD-splicing-dependent and induces pre- and post-synaptic differentiation of neurons and is required for IL1RAPL1-mediated synapse formation (By similarity).</text>
</comment>
<comment type="subcellular location">
    <subcellularLocation>
        <location evidence="1">Cell membrane</location>
        <topology evidence="1">Single-pass type I membrane protein</topology>
    </subcellularLocation>
    <subcellularLocation>
        <location evidence="1">Cytoplasm</location>
    </subcellularLocation>
    <subcellularLocation>
        <location evidence="1">Cell projection</location>
        <location evidence="1">Axon</location>
    </subcellularLocation>
    <subcellularLocation>
        <location evidence="1">Cell projection</location>
        <location evidence="1">Dendrite</location>
    </subcellularLocation>
    <text evidence="1">May localize to the cell body and growth cones of dendrite-like processes.</text>
</comment>
<comment type="domain">
    <text evidence="7">The TIR domain mediates NAD(+) hydrolase (NADase) activity. Self-association of TIR domains is required for NADase activity.</text>
</comment>
<comment type="similarity">
    <text evidence="9">Belongs to the interleukin-1 receptor family.</text>
</comment>
<proteinExistence type="evidence at transcript level"/>
<dbReference type="EC" id="3.2.2.6" evidence="7"/>
<dbReference type="EMBL" id="AB102652">
    <property type="protein sequence ID" value="BAC81121.1"/>
    <property type="molecule type" value="mRNA"/>
</dbReference>
<dbReference type="SMR" id="Q7YQL9"/>
<dbReference type="GlyCosmos" id="Q7YQL9">
    <property type="glycosylation" value="6 sites, No reported glycans"/>
</dbReference>
<dbReference type="GO" id="GO:0030424">
    <property type="term" value="C:axon"/>
    <property type="evidence" value="ECO:0007669"/>
    <property type="project" value="UniProtKB-SubCell"/>
</dbReference>
<dbReference type="GO" id="GO:0005737">
    <property type="term" value="C:cytoplasm"/>
    <property type="evidence" value="ECO:0007669"/>
    <property type="project" value="UniProtKB-SubCell"/>
</dbReference>
<dbReference type="GO" id="GO:0030425">
    <property type="term" value="C:dendrite"/>
    <property type="evidence" value="ECO:0007669"/>
    <property type="project" value="UniProtKB-SubCell"/>
</dbReference>
<dbReference type="GO" id="GO:0005886">
    <property type="term" value="C:plasma membrane"/>
    <property type="evidence" value="ECO:0000250"/>
    <property type="project" value="UniProtKB"/>
</dbReference>
<dbReference type="GO" id="GO:0061809">
    <property type="term" value="F:NAD+ nucleosidase activity, cyclic ADP-ribose generating"/>
    <property type="evidence" value="ECO:0007669"/>
    <property type="project" value="UniProtKB-EC"/>
</dbReference>
<dbReference type="GO" id="GO:0045920">
    <property type="term" value="P:negative regulation of exocytosis"/>
    <property type="evidence" value="ECO:0000250"/>
    <property type="project" value="UniProtKB"/>
</dbReference>
<dbReference type="GO" id="GO:0051965">
    <property type="term" value="P:positive regulation of synapse assembly"/>
    <property type="evidence" value="ECO:0000250"/>
    <property type="project" value="UniProtKB"/>
</dbReference>
<dbReference type="GO" id="GO:0010975">
    <property type="term" value="P:regulation of neuron projection development"/>
    <property type="evidence" value="ECO:0000250"/>
    <property type="project" value="UniProtKB"/>
</dbReference>
<dbReference type="GO" id="GO:0007165">
    <property type="term" value="P:signal transduction"/>
    <property type="evidence" value="ECO:0007669"/>
    <property type="project" value="InterPro"/>
</dbReference>
<dbReference type="CDD" id="cd00096">
    <property type="entry name" value="Ig"/>
    <property type="match status" value="1"/>
</dbReference>
<dbReference type="CDD" id="cd05896">
    <property type="entry name" value="Ig1_IL1RAPL-1_like"/>
    <property type="match status" value="1"/>
</dbReference>
<dbReference type="FunFam" id="2.60.40.10:FF:000188">
    <property type="entry name" value="Interleukin-1 receptor accessory protein-like 1"/>
    <property type="match status" value="1"/>
</dbReference>
<dbReference type="FunFam" id="2.60.40.10:FF:001486">
    <property type="entry name" value="Interleukin-1 receptor accessory protein-like 1"/>
    <property type="match status" value="1"/>
</dbReference>
<dbReference type="FunFam" id="2.60.40.10:FF:000220">
    <property type="entry name" value="X-linked interleukin-1 receptor accessory protein-like 1"/>
    <property type="match status" value="1"/>
</dbReference>
<dbReference type="FunFam" id="3.40.50.10140:FF:000004">
    <property type="entry name" value="X-linked interleukin-1 receptor accessory protein-like 1"/>
    <property type="match status" value="1"/>
</dbReference>
<dbReference type="Gene3D" id="2.60.40.10">
    <property type="entry name" value="Immunoglobulins"/>
    <property type="match status" value="3"/>
</dbReference>
<dbReference type="Gene3D" id="3.40.50.10140">
    <property type="entry name" value="Toll/interleukin-1 receptor homology (TIR) domain"/>
    <property type="match status" value="1"/>
</dbReference>
<dbReference type="InterPro" id="IPR007110">
    <property type="entry name" value="Ig-like_dom"/>
</dbReference>
<dbReference type="InterPro" id="IPR036179">
    <property type="entry name" value="Ig-like_dom_sf"/>
</dbReference>
<dbReference type="InterPro" id="IPR013783">
    <property type="entry name" value="Ig-like_fold"/>
</dbReference>
<dbReference type="InterPro" id="IPR003599">
    <property type="entry name" value="Ig_sub"/>
</dbReference>
<dbReference type="InterPro" id="IPR003598">
    <property type="entry name" value="Ig_sub2"/>
</dbReference>
<dbReference type="InterPro" id="IPR015621">
    <property type="entry name" value="IL-1_rcpt_fam"/>
</dbReference>
<dbReference type="InterPro" id="IPR041416">
    <property type="entry name" value="IL-1RAcP-like_ig"/>
</dbReference>
<dbReference type="InterPro" id="IPR013151">
    <property type="entry name" value="Immunoglobulin_dom"/>
</dbReference>
<dbReference type="InterPro" id="IPR000157">
    <property type="entry name" value="TIR_dom"/>
</dbReference>
<dbReference type="InterPro" id="IPR035897">
    <property type="entry name" value="Toll_tir_struct_dom_sf"/>
</dbReference>
<dbReference type="PANTHER" id="PTHR11890:SF22">
    <property type="entry name" value="INTERLEUKIN-1 RECEPTOR ACCESSORY PROTEIN-LIKE 1"/>
    <property type="match status" value="1"/>
</dbReference>
<dbReference type="PANTHER" id="PTHR11890">
    <property type="entry name" value="INTERLEUKIN-1 RECEPTOR FAMILY MEMBER"/>
    <property type="match status" value="1"/>
</dbReference>
<dbReference type="Pfam" id="PF00047">
    <property type="entry name" value="ig"/>
    <property type="match status" value="1"/>
</dbReference>
<dbReference type="Pfam" id="PF18452">
    <property type="entry name" value="Ig_6"/>
    <property type="match status" value="1"/>
</dbReference>
<dbReference type="Pfam" id="PF01582">
    <property type="entry name" value="TIR"/>
    <property type="match status" value="1"/>
</dbReference>
<dbReference type="PRINTS" id="PR01537">
    <property type="entry name" value="INTRLKN1R1F"/>
</dbReference>
<dbReference type="SMART" id="SM00409">
    <property type="entry name" value="IG"/>
    <property type="match status" value="3"/>
</dbReference>
<dbReference type="SMART" id="SM00408">
    <property type="entry name" value="IGc2"/>
    <property type="match status" value="2"/>
</dbReference>
<dbReference type="SMART" id="SM00255">
    <property type="entry name" value="TIR"/>
    <property type="match status" value="1"/>
</dbReference>
<dbReference type="SUPFAM" id="SSF48726">
    <property type="entry name" value="Immunoglobulin"/>
    <property type="match status" value="3"/>
</dbReference>
<dbReference type="SUPFAM" id="SSF52200">
    <property type="entry name" value="Toll/Interleukin receptor TIR domain"/>
    <property type="match status" value="1"/>
</dbReference>
<dbReference type="PROSITE" id="PS50835">
    <property type="entry name" value="IG_LIKE"/>
    <property type="match status" value="3"/>
</dbReference>
<dbReference type="PROSITE" id="PS50104">
    <property type="entry name" value="TIR"/>
    <property type="match status" value="1"/>
</dbReference>
<sequence>MKAPIPHLILLYATFTQSLKVVTKRGSADGCTDWSIDIKKYQVLVGEPVRIKCALFYGYIRTNYSLAQSAGLSLMWYKSSGPGDFEEPIAFDGSRMSKEEDSIWFRPTLLQDSGLYACVIRNSTYCMKVSISLTVGENDTGLCYNSKMKYFEKAELSKSKEISCRDIEDFLLPTREPEILWYKECRTKTWRPSIVFKRDTLLIREVREDDIGNYTCELKYGGFVVRRTTELTVTAPLTDKPPKLLYPVESKLTIQETQLGDSANLTCRAFFGYSGDVSPLIYWMKGEKFIEDLDENRVWESDIRILKEHLGEQEVSISLIVDSVEEGDLGNYSCYVENGNGRRHASVLLHKRELMYTVELAGGLGAILLLLVCLVTIYKCYKIEIMLFYRNHFGAEELDGDNKDYDAYLSYTKVDPDQWNQETGEEERFALEILPDMLEKHYGYKLFIPDRDLIPTGTYIEDVARCVDQSKRLIIVMTPNYVVRRGWSIFELETRLRNMLVTGEIKVILIECSELRGIMNYQEVEALKHTIKLLTVIKWHGPKCNKLNSKFWKRLQYEMPFKRIEPITHEQALDVSEQGPFGELQTVSAISMAAATSTALATAHPDLRSTFHNTYHSQMRQKHYYRSYEYDVPPTGTLPLTSIGNQHTYCNIPMTLINGQRPQTKSSREQNPDEAHTNSAILPLLPRETSISSVIW</sequence>
<keyword id="KW-1003">Cell membrane</keyword>
<keyword id="KW-0966">Cell projection</keyword>
<keyword id="KW-0963">Cytoplasm</keyword>
<keyword id="KW-1015">Disulfide bond</keyword>
<keyword id="KW-0325">Glycoprotein</keyword>
<keyword id="KW-0378">Hydrolase</keyword>
<keyword id="KW-0393">Immunoglobulin domain</keyword>
<keyword id="KW-0472">Membrane</keyword>
<keyword id="KW-0520">NAD</keyword>
<keyword id="KW-0675">Receptor</keyword>
<keyword id="KW-0677">Repeat</keyword>
<keyword id="KW-0732">Signal</keyword>
<keyword id="KW-0812">Transmembrane</keyword>
<keyword id="KW-1133">Transmembrane helix</keyword>
<name>IRPL1_PONPY</name>
<gene>
    <name type="primary">IL1RAPL1</name>
    <name type="synonym">OPHN4</name>
</gene>
<organism>
    <name type="scientific">Pongo pygmaeus</name>
    <name type="common">Bornean orangutan</name>
    <dbReference type="NCBI Taxonomy" id="9600"/>
    <lineage>
        <taxon>Eukaryota</taxon>
        <taxon>Metazoa</taxon>
        <taxon>Chordata</taxon>
        <taxon>Craniata</taxon>
        <taxon>Vertebrata</taxon>
        <taxon>Euteleostomi</taxon>
        <taxon>Mammalia</taxon>
        <taxon>Eutheria</taxon>
        <taxon>Euarchontoglires</taxon>
        <taxon>Primates</taxon>
        <taxon>Haplorrhini</taxon>
        <taxon>Catarrhini</taxon>
        <taxon>Hominidae</taxon>
        <taxon>Pongo</taxon>
    </lineage>
</organism>
<evidence type="ECO:0000250" key="1"/>
<evidence type="ECO:0000250" key="2">
    <source>
        <dbReference type="UniProtKB" id="P59823"/>
    </source>
</evidence>
<evidence type="ECO:0000250" key="3">
    <source>
        <dbReference type="UniProtKB" id="P59824"/>
    </source>
</evidence>
<evidence type="ECO:0000250" key="4">
    <source>
        <dbReference type="UniProtKB" id="Q9NZN1"/>
    </source>
</evidence>
<evidence type="ECO:0000255" key="5"/>
<evidence type="ECO:0000255" key="6">
    <source>
        <dbReference type="PROSITE-ProRule" id="PRU00114"/>
    </source>
</evidence>
<evidence type="ECO:0000255" key="7">
    <source>
        <dbReference type="PROSITE-ProRule" id="PRU00204"/>
    </source>
</evidence>
<evidence type="ECO:0000256" key="8">
    <source>
        <dbReference type="SAM" id="MobiDB-lite"/>
    </source>
</evidence>
<evidence type="ECO:0000305" key="9"/>
<feature type="signal peptide" evidence="5">
    <location>
        <begin position="1"/>
        <end position="18"/>
    </location>
</feature>
<feature type="chain" id="PRO_0000015457" description="Interleukin-1 receptor accessory protein-like 1">
    <location>
        <begin position="19"/>
        <end position="696"/>
    </location>
</feature>
<feature type="topological domain" description="Extracellular" evidence="5">
    <location>
        <begin position="19"/>
        <end position="357"/>
    </location>
</feature>
<feature type="transmembrane region" description="Helical" evidence="5">
    <location>
        <begin position="358"/>
        <end position="378"/>
    </location>
</feature>
<feature type="topological domain" description="Cytoplasmic" evidence="5">
    <location>
        <begin position="379"/>
        <end position="696"/>
    </location>
</feature>
<feature type="domain" description="Ig-like 1">
    <location>
        <begin position="19"/>
        <end position="134"/>
    </location>
</feature>
<feature type="domain" description="Ig-like 2">
    <location>
        <begin position="143"/>
        <end position="232"/>
    </location>
</feature>
<feature type="domain" description="Ig-like 3">
    <location>
        <begin position="242"/>
        <end position="350"/>
    </location>
</feature>
<feature type="domain" description="TIR" evidence="7">
    <location>
        <begin position="403"/>
        <end position="559"/>
    </location>
</feature>
<feature type="region of interest" description="Interaction with NCS1" evidence="1">
    <location>
        <begin position="549"/>
        <end position="644"/>
    </location>
</feature>
<feature type="region of interest" description="Disordered" evidence="8">
    <location>
        <begin position="659"/>
        <end position="680"/>
    </location>
</feature>
<feature type="compositionally biased region" description="Basic and acidic residues" evidence="8">
    <location>
        <begin position="666"/>
        <end position="676"/>
    </location>
</feature>
<feature type="active site" evidence="7">
    <location>
        <position position="491"/>
    </location>
</feature>
<feature type="site" description="Essential for interaction with PTPRD" evidence="2">
    <location>
        <position position="34"/>
    </location>
</feature>
<feature type="glycosylation site" description="N-linked (GlcNAc...) asparagine" evidence="5">
    <location>
        <position position="63"/>
    </location>
</feature>
<feature type="glycosylation site" description="N-linked (GlcNAc...) asparagine" evidence="5">
    <location>
        <position position="122"/>
    </location>
</feature>
<feature type="glycosylation site" description="N-linked (GlcNAc...) asparagine" evidence="5">
    <location>
        <position position="138"/>
    </location>
</feature>
<feature type="glycosylation site" description="N-linked (GlcNAc...) asparagine" evidence="5">
    <location>
        <position position="213"/>
    </location>
</feature>
<feature type="glycosylation site" description="N-linked (GlcNAc...) asparagine" evidence="5">
    <location>
        <position position="264"/>
    </location>
</feature>
<feature type="glycosylation site" description="N-linked (GlcNAc...) asparagine" evidence="5">
    <location>
        <position position="331"/>
    </location>
</feature>
<feature type="disulfide bond" evidence="2">
    <location>
        <begin position="31"/>
        <end position="126"/>
    </location>
</feature>
<feature type="disulfide bond" evidence="6">
    <location>
        <begin position="53"/>
        <end position="118"/>
    </location>
</feature>
<feature type="disulfide bond" evidence="2">
    <location>
        <begin position="143"/>
        <end position="185"/>
    </location>
</feature>
<feature type="disulfide bond" evidence="6">
    <location>
        <begin position="164"/>
        <end position="216"/>
    </location>
</feature>
<feature type="disulfide bond" evidence="6">
    <location>
        <begin position="267"/>
        <end position="334"/>
    </location>
</feature>
<accession>Q7YQL9</accession>
<reference key="1">
    <citation type="journal article" date="2003" name="Mol. Biol. Evol.">
        <title>Gene diversity patterns at 10 X-chromosomal loci in humans and chimpanzees.</title>
        <authorList>
            <person name="Kitano T."/>
            <person name="Schwarz C."/>
            <person name="Nickel B."/>
            <person name="Paeaebo S."/>
        </authorList>
    </citation>
    <scope>NUCLEOTIDE SEQUENCE [MRNA]</scope>
</reference>
<protein>
    <recommendedName>
        <fullName>Interleukin-1 receptor accessory protein-like 1</fullName>
        <shortName>IL-1-RAPL-1</shortName>
        <shortName>IL-1RAPL-1</shortName>
        <shortName>IL1RAPL-1</shortName>
        <ecNumber evidence="7">3.2.2.6</ecNumber>
    </recommendedName>
    <alternativeName>
        <fullName>X-linked interleukin-1 receptor accessory protein-like 1</fullName>
    </alternativeName>
</protein>